<sequence length="490" mass="55010">MVPVIALVGRPNVGKSTMFNRLTRTRDAIVGDLSGLTRDRQYGEAKWQGRSYILIDTGGISGDEHGMDEKMAEQSLLAIEEADVVLFLVDARAGYTAADQMIGEHLRKRNKRSYVVANKIDNIDENLARAEFSPMGLGDAIPVAGAHGRGISQMLEIALREFPKDEDELEEGEEVEEVAEGQEAKRIPGPSEKDGIKIAIIGRPNVGKSTLVNRMLGEDRVIVYDEPGTTRDSIYIPFERNEEKYTLIDTAGVRKRGKIHEEVEKFSVVKTLQAIKDANVVIFVMDAREGVVDHDLNLLGFALEAGRALVIALNKWDGMTPGERDFVKIELERRLFFVDFADIHFISAMHGTGVGNLYQSVQNSFKSAVTRWPTSRLTQILEDAVSEHAPPMVGSRRIKLRYAHLGGANPPLIVIHGNQVEKVPKSYVRYLENTYRRVLKLVGTPIRIEFKGGENPYEGNKNTLTDRQVNKKRRMMSHHKKADKKRRDKR</sequence>
<feature type="chain" id="PRO_1000011696" description="GTPase Der">
    <location>
        <begin position="1"/>
        <end position="490"/>
    </location>
</feature>
<feature type="domain" description="EngA-type G 1">
    <location>
        <begin position="3"/>
        <end position="166"/>
    </location>
</feature>
<feature type="domain" description="EngA-type G 2">
    <location>
        <begin position="196"/>
        <end position="369"/>
    </location>
</feature>
<feature type="domain" description="KH-like" evidence="1">
    <location>
        <begin position="370"/>
        <end position="454"/>
    </location>
</feature>
<feature type="region of interest" description="Disordered" evidence="2">
    <location>
        <begin position="452"/>
        <end position="490"/>
    </location>
</feature>
<feature type="compositionally biased region" description="Basic residues" evidence="2">
    <location>
        <begin position="470"/>
        <end position="490"/>
    </location>
</feature>
<feature type="binding site" evidence="1">
    <location>
        <begin position="9"/>
        <end position="16"/>
    </location>
    <ligand>
        <name>GTP</name>
        <dbReference type="ChEBI" id="CHEBI:37565"/>
        <label>1</label>
    </ligand>
</feature>
<feature type="binding site" evidence="1">
    <location>
        <begin position="56"/>
        <end position="60"/>
    </location>
    <ligand>
        <name>GTP</name>
        <dbReference type="ChEBI" id="CHEBI:37565"/>
        <label>1</label>
    </ligand>
</feature>
<feature type="binding site" evidence="1">
    <location>
        <begin position="118"/>
        <end position="121"/>
    </location>
    <ligand>
        <name>GTP</name>
        <dbReference type="ChEBI" id="CHEBI:37565"/>
        <label>1</label>
    </ligand>
</feature>
<feature type="binding site" evidence="1">
    <location>
        <begin position="202"/>
        <end position="209"/>
    </location>
    <ligand>
        <name>GTP</name>
        <dbReference type="ChEBI" id="CHEBI:37565"/>
        <label>2</label>
    </ligand>
</feature>
<feature type="binding site" evidence="1">
    <location>
        <begin position="249"/>
        <end position="253"/>
    </location>
    <ligand>
        <name>GTP</name>
        <dbReference type="ChEBI" id="CHEBI:37565"/>
        <label>2</label>
    </ligand>
</feature>
<feature type="binding site" evidence="1">
    <location>
        <begin position="314"/>
        <end position="317"/>
    </location>
    <ligand>
        <name>GTP</name>
        <dbReference type="ChEBI" id="CHEBI:37565"/>
        <label>2</label>
    </ligand>
</feature>
<keyword id="KW-0342">GTP-binding</keyword>
<keyword id="KW-0547">Nucleotide-binding</keyword>
<keyword id="KW-0677">Repeat</keyword>
<keyword id="KW-0690">Ribosome biogenesis</keyword>
<evidence type="ECO:0000255" key="1">
    <source>
        <dbReference type="HAMAP-Rule" id="MF_00195"/>
    </source>
</evidence>
<evidence type="ECO:0000256" key="2">
    <source>
        <dbReference type="SAM" id="MobiDB-lite"/>
    </source>
</evidence>
<comment type="function">
    <text evidence="1">GTPase that plays an essential role in the late steps of ribosome biogenesis.</text>
</comment>
<comment type="subunit">
    <text evidence="1">Associates with the 50S ribosomal subunit.</text>
</comment>
<comment type="similarity">
    <text evidence="1">Belongs to the TRAFAC class TrmE-Era-EngA-EngB-Septin-like GTPase superfamily. EngA (Der) GTPase family.</text>
</comment>
<proteinExistence type="inferred from homology"/>
<dbReference type="EMBL" id="CP000058">
    <property type="protein sequence ID" value="AAZ35610.1"/>
    <property type="molecule type" value="Genomic_DNA"/>
</dbReference>
<dbReference type="RefSeq" id="WP_004666071.1">
    <property type="nucleotide sequence ID" value="NC_005773.3"/>
</dbReference>
<dbReference type="SMR" id="Q48LZ0"/>
<dbReference type="GeneID" id="69858316"/>
<dbReference type="KEGG" id="psp:PSPPH_1324"/>
<dbReference type="eggNOG" id="COG1160">
    <property type="taxonomic scope" value="Bacteria"/>
</dbReference>
<dbReference type="HOGENOM" id="CLU_016077_6_2_6"/>
<dbReference type="Proteomes" id="UP000000551">
    <property type="component" value="Chromosome"/>
</dbReference>
<dbReference type="GO" id="GO:0005525">
    <property type="term" value="F:GTP binding"/>
    <property type="evidence" value="ECO:0007669"/>
    <property type="project" value="UniProtKB-UniRule"/>
</dbReference>
<dbReference type="GO" id="GO:0043022">
    <property type="term" value="F:ribosome binding"/>
    <property type="evidence" value="ECO:0007669"/>
    <property type="project" value="TreeGrafter"/>
</dbReference>
<dbReference type="GO" id="GO:0042254">
    <property type="term" value="P:ribosome biogenesis"/>
    <property type="evidence" value="ECO:0007669"/>
    <property type="project" value="UniProtKB-KW"/>
</dbReference>
<dbReference type="CDD" id="cd01894">
    <property type="entry name" value="EngA1"/>
    <property type="match status" value="1"/>
</dbReference>
<dbReference type="CDD" id="cd01895">
    <property type="entry name" value="EngA2"/>
    <property type="match status" value="1"/>
</dbReference>
<dbReference type="FunFam" id="3.30.300.20:FF:000004">
    <property type="entry name" value="GTPase Der"/>
    <property type="match status" value="1"/>
</dbReference>
<dbReference type="FunFam" id="3.40.50.300:FF:000040">
    <property type="entry name" value="GTPase Der"/>
    <property type="match status" value="1"/>
</dbReference>
<dbReference type="FunFam" id="3.40.50.300:FF:000057">
    <property type="entry name" value="GTPase Der"/>
    <property type="match status" value="1"/>
</dbReference>
<dbReference type="Gene3D" id="3.30.300.20">
    <property type="match status" value="1"/>
</dbReference>
<dbReference type="Gene3D" id="3.40.50.300">
    <property type="entry name" value="P-loop containing nucleotide triphosphate hydrolases"/>
    <property type="match status" value="2"/>
</dbReference>
<dbReference type="HAMAP" id="MF_00195">
    <property type="entry name" value="GTPase_Der"/>
    <property type="match status" value="1"/>
</dbReference>
<dbReference type="InterPro" id="IPR031166">
    <property type="entry name" value="G_ENGA"/>
</dbReference>
<dbReference type="InterPro" id="IPR006073">
    <property type="entry name" value="GTP-bd"/>
</dbReference>
<dbReference type="InterPro" id="IPR016484">
    <property type="entry name" value="GTPase_Der"/>
</dbReference>
<dbReference type="InterPro" id="IPR032859">
    <property type="entry name" value="KH_dom-like"/>
</dbReference>
<dbReference type="InterPro" id="IPR015946">
    <property type="entry name" value="KH_dom-like_a/b"/>
</dbReference>
<dbReference type="InterPro" id="IPR027417">
    <property type="entry name" value="P-loop_NTPase"/>
</dbReference>
<dbReference type="InterPro" id="IPR005225">
    <property type="entry name" value="Small_GTP-bd"/>
</dbReference>
<dbReference type="NCBIfam" id="TIGR03594">
    <property type="entry name" value="GTPase_EngA"/>
    <property type="match status" value="1"/>
</dbReference>
<dbReference type="NCBIfam" id="TIGR00231">
    <property type="entry name" value="small_GTP"/>
    <property type="match status" value="2"/>
</dbReference>
<dbReference type="PANTHER" id="PTHR43834">
    <property type="entry name" value="GTPASE DER"/>
    <property type="match status" value="1"/>
</dbReference>
<dbReference type="PANTHER" id="PTHR43834:SF6">
    <property type="entry name" value="GTPASE DER"/>
    <property type="match status" value="1"/>
</dbReference>
<dbReference type="Pfam" id="PF14714">
    <property type="entry name" value="KH_dom-like"/>
    <property type="match status" value="1"/>
</dbReference>
<dbReference type="Pfam" id="PF01926">
    <property type="entry name" value="MMR_HSR1"/>
    <property type="match status" value="2"/>
</dbReference>
<dbReference type="PIRSF" id="PIRSF006485">
    <property type="entry name" value="GTP-binding_EngA"/>
    <property type="match status" value="1"/>
</dbReference>
<dbReference type="PRINTS" id="PR00326">
    <property type="entry name" value="GTP1OBG"/>
</dbReference>
<dbReference type="SUPFAM" id="SSF52540">
    <property type="entry name" value="P-loop containing nucleoside triphosphate hydrolases"/>
    <property type="match status" value="2"/>
</dbReference>
<dbReference type="PROSITE" id="PS51712">
    <property type="entry name" value="G_ENGA"/>
    <property type="match status" value="2"/>
</dbReference>
<protein>
    <recommendedName>
        <fullName evidence="1">GTPase Der</fullName>
    </recommendedName>
    <alternativeName>
        <fullName evidence="1">GTP-binding protein EngA</fullName>
    </alternativeName>
</protein>
<organism>
    <name type="scientific">Pseudomonas savastanoi pv. phaseolicola (strain 1448A / Race 6)</name>
    <name type="common">Pseudomonas syringae pv. phaseolicola (strain 1448A / Race 6)</name>
    <dbReference type="NCBI Taxonomy" id="264730"/>
    <lineage>
        <taxon>Bacteria</taxon>
        <taxon>Pseudomonadati</taxon>
        <taxon>Pseudomonadota</taxon>
        <taxon>Gammaproteobacteria</taxon>
        <taxon>Pseudomonadales</taxon>
        <taxon>Pseudomonadaceae</taxon>
        <taxon>Pseudomonas</taxon>
    </lineage>
</organism>
<reference key="1">
    <citation type="journal article" date="2005" name="J. Bacteriol.">
        <title>Whole-genome sequence analysis of Pseudomonas syringae pv. phaseolicola 1448A reveals divergence among pathovars in genes involved in virulence and transposition.</title>
        <authorList>
            <person name="Joardar V."/>
            <person name="Lindeberg M."/>
            <person name="Jackson R.W."/>
            <person name="Selengut J."/>
            <person name="Dodson R."/>
            <person name="Brinkac L.M."/>
            <person name="Daugherty S.C."/>
            <person name="DeBoy R.T."/>
            <person name="Durkin A.S."/>
            <person name="Gwinn Giglio M."/>
            <person name="Madupu R."/>
            <person name="Nelson W.C."/>
            <person name="Rosovitz M.J."/>
            <person name="Sullivan S.A."/>
            <person name="Crabtree J."/>
            <person name="Creasy T."/>
            <person name="Davidsen T.M."/>
            <person name="Haft D.H."/>
            <person name="Zafar N."/>
            <person name="Zhou L."/>
            <person name="Halpin R."/>
            <person name="Holley T."/>
            <person name="Khouri H.M."/>
            <person name="Feldblyum T.V."/>
            <person name="White O."/>
            <person name="Fraser C.M."/>
            <person name="Chatterjee A.K."/>
            <person name="Cartinhour S."/>
            <person name="Schneider D."/>
            <person name="Mansfield J.W."/>
            <person name="Collmer A."/>
            <person name="Buell R."/>
        </authorList>
    </citation>
    <scope>NUCLEOTIDE SEQUENCE [LARGE SCALE GENOMIC DNA]</scope>
    <source>
        <strain>1448A / Race 6</strain>
    </source>
</reference>
<accession>Q48LZ0</accession>
<gene>
    <name evidence="1" type="primary">der</name>
    <name type="synonym">engA</name>
    <name type="ordered locus">PSPPH_1324</name>
</gene>
<name>DER_PSE14</name>